<keyword id="KW-0846">Cobalamin</keyword>
<keyword id="KW-0170">Cobalt</keyword>
<keyword id="KW-1015">Disulfide bond</keyword>
<keyword id="KW-0237">DNA synthesis</keyword>
<keyword id="KW-0547">Nucleotide-binding</keyword>
<keyword id="KW-0560">Oxidoreductase</keyword>
<keyword id="KW-1185">Reference proteome</keyword>
<reference key="1">
    <citation type="journal article" date="2001" name="Science">
        <title>The genome of the natural genetic engineer Agrobacterium tumefaciens C58.</title>
        <authorList>
            <person name="Wood D.W."/>
            <person name="Setubal J.C."/>
            <person name="Kaul R."/>
            <person name="Monks D.E."/>
            <person name="Kitajima J.P."/>
            <person name="Okura V.K."/>
            <person name="Zhou Y."/>
            <person name="Chen L."/>
            <person name="Wood G.E."/>
            <person name="Almeida N.F. Jr."/>
            <person name="Woo L."/>
            <person name="Chen Y."/>
            <person name="Paulsen I.T."/>
            <person name="Eisen J.A."/>
            <person name="Karp P.D."/>
            <person name="Bovee D. Sr."/>
            <person name="Chapman P."/>
            <person name="Clendenning J."/>
            <person name="Deatherage G."/>
            <person name="Gillet W."/>
            <person name="Grant C."/>
            <person name="Kutyavin T."/>
            <person name="Levy R."/>
            <person name="Li M.-J."/>
            <person name="McClelland E."/>
            <person name="Palmieri A."/>
            <person name="Raymond C."/>
            <person name="Rouse G."/>
            <person name="Saenphimmachak C."/>
            <person name="Wu Z."/>
            <person name="Romero P."/>
            <person name="Gordon D."/>
            <person name="Zhang S."/>
            <person name="Yoo H."/>
            <person name="Tao Y."/>
            <person name="Biddle P."/>
            <person name="Jung M."/>
            <person name="Krespan W."/>
            <person name="Perry M."/>
            <person name="Gordon-Kamm B."/>
            <person name="Liao L."/>
            <person name="Kim S."/>
            <person name="Hendrick C."/>
            <person name="Zhao Z.-Y."/>
            <person name="Dolan M."/>
            <person name="Chumley F."/>
            <person name="Tingey S.V."/>
            <person name="Tomb J.-F."/>
            <person name="Gordon M.P."/>
            <person name="Olson M.V."/>
            <person name="Nester E.W."/>
        </authorList>
    </citation>
    <scope>NUCLEOTIDE SEQUENCE [LARGE SCALE GENOMIC DNA]</scope>
    <source>
        <strain>C58 / ATCC 33970</strain>
    </source>
</reference>
<reference key="2">
    <citation type="journal article" date="2001" name="Science">
        <title>Genome sequence of the plant pathogen and biotechnology agent Agrobacterium tumefaciens C58.</title>
        <authorList>
            <person name="Goodner B."/>
            <person name="Hinkle G."/>
            <person name="Gattung S."/>
            <person name="Miller N."/>
            <person name="Blanchard M."/>
            <person name="Qurollo B."/>
            <person name="Goldman B.S."/>
            <person name="Cao Y."/>
            <person name="Askenazi M."/>
            <person name="Halling C."/>
            <person name="Mullin L."/>
            <person name="Houmiel K."/>
            <person name="Gordon J."/>
            <person name="Vaudin M."/>
            <person name="Iartchouk O."/>
            <person name="Epp A."/>
            <person name="Liu F."/>
            <person name="Wollam C."/>
            <person name="Allinger M."/>
            <person name="Doughty D."/>
            <person name="Scott C."/>
            <person name="Lappas C."/>
            <person name="Markelz B."/>
            <person name="Flanagan C."/>
            <person name="Crowell C."/>
            <person name="Gurson J."/>
            <person name="Lomo C."/>
            <person name="Sear C."/>
            <person name="Strub G."/>
            <person name="Cielo C."/>
            <person name="Slater S."/>
        </authorList>
    </citation>
    <scope>NUCLEOTIDE SEQUENCE [LARGE SCALE GENOMIC DNA]</scope>
    <source>
        <strain>C58 / ATCC 33970</strain>
    </source>
</reference>
<name>NRDJ_AGRFC</name>
<organism>
    <name type="scientific">Agrobacterium fabrum (strain C58 / ATCC 33970)</name>
    <name type="common">Agrobacterium tumefaciens (strain C58)</name>
    <dbReference type="NCBI Taxonomy" id="176299"/>
    <lineage>
        <taxon>Bacteria</taxon>
        <taxon>Pseudomonadati</taxon>
        <taxon>Pseudomonadota</taxon>
        <taxon>Alphaproteobacteria</taxon>
        <taxon>Hyphomicrobiales</taxon>
        <taxon>Rhizobiaceae</taxon>
        <taxon>Rhizobium/Agrobacterium group</taxon>
        <taxon>Agrobacterium</taxon>
        <taxon>Agrobacterium tumefaciens complex</taxon>
    </lineage>
</organism>
<protein>
    <recommendedName>
        <fullName>Vitamin B12-dependent ribonucleotide reductase</fullName>
        <ecNumber>1.17.4.1</ecNumber>
    </recommendedName>
    <alternativeName>
        <fullName>Ribonucleoside-diphosphate reductase NrdJ</fullName>
    </alternativeName>
</protein>
<comment type="function">
    <text evidence="1">Catalyzes the reduction of ribonucleotides to deoxyribonucleotides. May function to provide a pool of deoxyribonucleotide precursors for DNA repair during oxygen limitation and/or for immediate growth after restoration of oxygen (By similarity).</text>
</comment>
<comment type="catalytic activity">
    <reaction>
        <text>a 2'-deoxyribonucleoside 5'-diphosphate + [thioredoxin]-disulfide + H2O = a ribonucleoside 5'-diphosphate + [thioredoxin]-dithiol</text>
        <dbReference type="Rhea" id="RHEA:23252"/>
        <dbReference type="Rhea" id="RHEA-COMP:10698"/>
        <dbReference type="Rhea" id="RHEA-COMP:10700"/>
        <dbReference type="ChEBI" id="CHEBI:15377"/>
        <dbReference type="ChEBI" id="CHEBI:29950"/>
        <dbReference type="ChEBI" id="CHEBI:50058"/>
        <dbReference type="ChEBI" id="CHEBI:57930"/>
        <dbReference type="ChEBI" id="CHEBI:73316"/>
        <dbReference type="EC" id="1.17.4.1"/>
    </reaction>
</comment>
<comment type="cofactor">
    <cofactor evidence="1">
        <name>adenosylcob(III)alamin</name>
        <dbReference type="ChEBI" id="CHEBI:18408"/>
    </cofactor>
    <text evidence="1">5'-deoxyadenosylcobalamine (coenzyme B12).</text>
</comment>
<comment type="similarity">
    <text evidence="3">Belongs to the ribonucleoside diphosphate reductase class-2 family.</text>
</comment>
<accession>Q8UEM4</accession>
<accession>Q7CYN2</accession>
<gene>
    <name type="primary">nrdJ</name>
    <name type="ordered locus">Atu1733</name>
    <name type="ORF">AGR_C_3183</name>
</gene>
<proteinExistence type="inferred from homology"/>
<dbReference type="EC" id="1.17.4.1"/>
<dbReference type="EMBL" id="AE007869">
    <property type="protein sequence ID" value="AAK87503.1"/>
    <property type="molecule type" value="Genomic_DNA"/>
</dbReference>
<dbReference type="PIR" id="AF2789">
    <property type="entry name" value="AF2789"/>
</dbReference>
<dbReference type="PIR" id="F97568">
    <property type="entry name" value="F97568"/>
</dbReference>
<dbReference type="RefSeq" id="NP_354718.1">
    <property type="nucleotide sequence ID" value="NC_003062.2"/>
</dbReference>
<dbReference type="RefSeq" id="WP_010971830.1">
    <property type="nucleotide sequence ID" value="NC_003062.2"/>
</dbReference>
<dbReference type="SMR" id="Q8UEM4"/>
<dbReference type="STRING" id="176299.Atu1733"/>
<dbReference type="EnsemblBacteria" id="AAK87503">
    <property type="protein sequence ID" value="AAK87503"/>
    <property type="gene ID" value="Atu1733"/>
</dbReference>
<dbReference type="GeneID" id="1139199"/>
<dbReference type="KEGG" id="atu:Atu1733"/>
<dbReference type="PATRIC" id="fig|176299.10.peg.1745"/>
<dbReference type="eggNOG" id="COG0209">
    <property type="taxonomic scope" value="Bacteria"/>
</dbReference>
<dbReference type="HOGENOM" id="CLU_000404_0_1_5"/>
<dbReference type="OrthoDB" id="9762933at2"/>
<dbReference type="PhylomeDB" id="Q8UEM4"/>
<dbReference type="BioCyc" id="AGRO:ATU1733-MONOMER"/>
<dbReference type="Proteomes" id="UP000000813">
    <property type="component" value="Chromosome circular"/>
</dbReference>
<dbReference type="GO" id="GO:0031419">
    <property type="term" value="F:cobalamin binding"/>
    <property type="evidence" value="ECO:0007669"/>
    <property type="project" value="UniProtKB-KW"/>
</dbReference>
<dbReference type="GO" id="GO:0050897">
    <property type="term" value="F:cobalt ion binding"/>
    <property type="evidence" value="ECO:0007669"/>
    <property type="project" value="InterPro"/>
</dbReference>
<dbReference type="GO" id="GO:0000166">
    <property type="term" value="F:nucleotide binding"/>
    <property type="evidence" value="ECO:0007669"/>
    <property type="project" value="UniProtKB-KW"/>
</dbReference>
<dbReference type="GO" id="GO:0004748">
    <property type="term" value="F:ribonucleoside-diphosphate reductase activity, thioredoxin disulfide as acceptor"/>
    <property type="evidence" value="ECO:0007669"/>
    <property type="project" value="UniProtKB-EC"/>
</dbReference>
<dbReference type="GO" id="GO:0071897">
    <property type="term" value="P:DNA biosynthetic process"/>
    <property type="evidence" value="ECO:0007669"/>
    <property type="project" value="UniProtKB-KW"/>
</dbReference>
<dbReference type="CDD" id="cd02888">
    <property type="entry name" value="RNR_II_dimer"/>
    <property type="match status" value="1"/>
</dbReference>
<dbReference type="FunFam" id="3.20.70.20:FF:000016">
    <property type="entry name" value="Vitamin B12-dependent ribonucleotide reductase"/>
    <property type="match status" value="1"/>
</dbReference>
<dbReference type="FunFam" id="3.20.70.20:FF:000017">
    <property type="entry name" value="Vitamin B12-dependent ribonucleotide reductase"/>
    <property type="match status" value="1"/>
</dbReference>
<dbReference type="Gene3D" id="3.20.70.20">
    <property type="match status" value="3"/>
</dbReference>
<dbReference type="InterPro" id="IPR050862">
    <property type="entry name" value="RdRp_reductase_class-2"/>
</dbReference>
<dbReference type="InterPro" id="IPR013678">
    <property type="entry name" value="RNR_2_N"/>
</dbReference>
<dbReference type="InterPro" id="IPR000788">
    <property type="entry name" value="RNR_lg_C"/>
</dbReference>
<dbReference type="InterPro" id="IPR013344">
    <property type="entry name" value="RNR_NrdJ/NrdZ"/>
</dbReference>
<dbReference type="InterPro" id="IPR024434">
    <property type="entry name" value="TSCPD_dom"/>
</dbReference>
<dbReference type="InterPro" id="IPR029072">
    <property type="entry name" value="YebC-like"/>
</dbReference>
<dbReference type="NCBIfam" id="TIGR02504">
    <property type="entry name" value="NrdJ_Z"/>
    <property type="match status" value="1"/>
</dbReference>
<dbReference type="NCBIfam" id="NF005736">
    <property type="entry name" value="PRK07562.1"/>
    <property type="match status" value="1"/>
</dbReference>
<dbReference type="PANTHER" id="PTHR43371:SF1">
    <property type="entry name" value="RIBONUCLEOSIDE-DIPHOSPHATE REDUCTASE"/>
    <property type="match status" value="1"/>
</dbReference>
<dbReference type="PANTHER" id="PTHR43371">
    <property type="entry name" value="VITAMIN B12-DEPENDENT RIBONUCLEOTIDE REDUCTASE"/>
    <property type="match status" value="1"/>
</dbReference>
<dbReference type="Pfam" id="PF08471">
    <property type="entry name" value="Ribonuc_red_2_N"/>
    <property type="match status" value="1"/>
</dbReference>
<dbReference type="Pfam" id="PF02867">
    <property type="entry name" value="Ribonuc_red_lgC"/>
    <property type="match status" value="2"/>
</dbReference>
<dbReference type="Pfam" id="PF12637">
    <property type="entry name" value="TSCPD"/>
    <property type="match status" value="1"/>
</dbReference>
<dbReference type="PRINTS" id="PR01183">
    <property type="entry name" value="RIBORDTASEM1"/>
</dbReference>
<dbReference type="SUPFAM" id="SSF51998">
    <property type="entry name" value="PFL-like glycyl radical enzymes"/>
    <property type="match status" value="1"/>
</dbReference>
<dbReference type="SUPFAM" id="SSF75625">
    <property type="entry name" value="YebC-like"/>
    <property type="match status" value="1"/>
</dbReference>
<feature type="chain" id="PRO_0000231657" description="Vitamin B12-dependent ribonucleotide reductase">
    <location>
        <begin position="1"/>
        <end position="1272"/>
    </location>
</feature>
<feature type="region of interest" description="Disordered" evidence="2">
    <location>
        <begin position="1120"/>
        <end position="1147"/>
    </location>
</feature>
<feature type="active site" description="Proton acceptor" evidence="1">
    <location>
        <position position="474"/>
    </location>
</feature>
<feature type="active site" description="Cysteine radical intermediate" evidence="1">
    <location>
        <position position="476"/>
    </location>
</feature>
<feature type="active site" description="Proton acceptor" evidence="1">
    <location>
        <position position="478"/>
    </location>
</feature>
<feature type="binding site" evidence="1">
    <location>
        <position position="153"/>
    </location>
    <ligand>
        <name>substrate</name>
    </ligand>
</feature>
<feature type="binding site" evidence="1">
    <location>
        <begin position="198"/>
        <end position="199"/>
    </location>
    <ligand>
        <name>substrate</name>
    </ligand>
</feature>
<feature type="binding site" evidence="1">
    <location>
        <position position="230"/>
    </location>
    <ligand>
        <name>substrate</name>
    </ligand>
</feature>
<feature type="binding site" evidence="1">
    <location>
        <begin position="474"/>
        <end position="478"/>
    </location>
    <ligand>
        <name>substrate</name>
    </ligand>
</feature>
<feature type="binding site" evidence="1">
    <location>
        <begin position="675"/>
        <end position="679"/>
    </location>
    <ligand>
        <name>substrate</name>
    </ligand>
</feature>
<feature type="disulfide bond" description="Redox-active" evidence="1">
    <location>
        <begin position="199"/>
        <end position="487"/>
    </location>
</feature>
<evidence type="ECO:0000250" key="1"/>
<evidence type="ECO:0000256" key="2">
    <source>
        <dbReference type="SAM" id="MobiDB-lite"/>
    </source>
</evidence>
<evidence type="ECO:0000305" key="3"/>
<sequence length="1272" mass="139623">MRIERRFTKPGQSSYAEIEFRKAVSEIKNPDGSVVFRLADIDVPAQFSQVATDVLAQKYFRKAGVPKLLKKVEENDVPSFLWRSVADEKALKELPEAERYGSETDARQVFDRLAGTWAYWGWKGKYFSTEEDASAFKDELAYMLATQRVAPNSPQWFNTGLHWAYGIDGPGQGHFYVDPFTGKLTKSKSAYEHPQPHACFIQSVEDDLVNEGGIMDLWVREARLFKYGSGTGSNFSYLRGEGEKLSGGGKSSGLMSFLKIGDRAAGAIKSGGTTRRAAKMVVVDADHPDIEAYIDWKVNEEQKVAALVTGSKIVAKHLKAIMKACVNCEADNGDCFDPAKNPALKREIRAAKKDMVPENYVKRVIQFAEQGYKDIQFKTYDTDWDSEAYLTVSGQNSNNSVSLKDDFLRAVENDGNWNLTARKDGKVMKTLKARDLWEKISHAAWASADPGLHFNTTMNDWHTSPAEGPIRASNPCSEYMFLDDTACNLASLNLLQFKDAKTKRIDIADYEHAVRLWTVVLEVSVMMAQFPSRQIAERSYEYRTLGLGYANIGGLLMSSGIPYDSDEGRAIAGALTAIMTGVSYATSAEMAGELGPFPSFAPNRDNMLRVIRNHRRAAHGQSEGYEGLSVNPVALIHADCTDQDLVAHATAAWDKALELGEKHGYRNAQTTVIAPTGTIGLVMDCDTTGIEPDFALVKFKKLAGGGYFKIINRAVPESLRSLGYSESQIAEIEAYAVGHGNLNQAPAINPSTLKAKGFTDEKIEAVNAALKSAFDIKFVFNQWTLGADFLKGTLKVSDEQLSDMSFNLLDHLGFAKKDIEAANVHVCGAMTLEGAPFLKNEHLAVFDCANPCGKIGKRYLSVESHIRMMAAAQPFISGAISKTINMPNDATVEDCGAAYMLSWKLALKANALYRDGSKLSQPLNASLVEDEDDEDFVEELIQQPLAQQAVTITEKIVERVIERVSREREKLPNRRQGYTQKATVGGHKVYLRTGEFGDGRIGEIFIDMHKEGAAFRAMMNNFAIAISLGLQYGVPLEEYVEAFTFTKFEPAGMVQGNDAIKNATSILDYVFRELAVSYLGRHDLAHVDTSDFSNTALGKGIQEGKTNLLSTGWTRGYKPTLVSSNEGDRAASEPKGSATAAPARGSANVTSFAGSAARKLEPTVAITTSEIVSFKRDYEERAKELAEEIAEEVIDEVVQEAQQTATALFSDKAAADAASAKAEAKKKENERRMRSIAQGYTGNMCSECQNFTMVRNGTCEKCDTCGATSGCS</sequence>